<name>ISPDF_CAMC1</name>
<proteinExistence type="inferred from homology"/>
<keyword id="KW-0414">Isoprene biosynthesis</keyword>
<keyword id="KW-0456">Lyase</keyword>
<keyword id="KW-0479">Metal-binding</keyword>
<keyword id="KW-0511">Multifunctional enzyme</keyword>
<keyword id="KW-0548">Nucleotidyltransferase</keyword>
<keyword id="KW-0808">Transferase</keyword>
<reference key="1">
    <citation type="submission" date="2007-10" db="EMBL/GenBank/DDBJ databases">
        <title>Genome sequence of Campylobacter concisus 13826 isolated from human feces.</title>
        <authorList>
            <person name="Fouts D.E."/>
            <person name="Mongodin E.F."/>
            <person name="Puiu D."/>
            <person name="Sebastian Y."/>
            <person name="Miller W.G."/>
            <person name="Mandrell R.E."/>
            <person name="On S."/>
            <person name="Nelson K.E."/>
        </authorList>
    </citation>
    <scope>NUCLEOTIDE SEQUENCE [LARGE SCALE GENOMIC DNA]</scope>
    <source>
        <strain>13826</strain>
    </source>
</reference>
<gene>
    <name evidence="1" type="primary">ispDF</name>
    <name type="ordered locus">Ccon26_06810</name>
    <name type="ORF">CCC13826_1467</name>
</gene>
<protein>
    <recommendedName>
        <fullName evidence="1">Bifunctional enzyme IspD/IspF</fullName>
    </recommendedName>
    <domain>
        <recommendedName>
            <fullName evidence="1">2-C-methyl-D-erythritol 4-phosphate cytidylyltransferase</fullName>
            <ecNumber evidence="1">2.7.7.60</ecNumber>
        </recommendedName>
        <alternativeName>
            <fullName evidence="1">4-diphosphocytidyl-2C-methyl-D-erythritol synthase</fullName>
        </alternativeName>
        <alternativeName>
            <fullName evidence="1">MEP cytidylyltransferase</fullName>
            <shortName evidence="1">MCT</shortName>
        </alternativeName>
    </domain>
    <domain>
        <recommendedName>
            <fullName evidence="1">2-C-methyl-D-erythritol 2,4-cyclodiphosphate synthase</fullName>
            <shortName evidence="1">MECDP-synthase</shortName>
            <shortName evidence="1">MECPP-synthase</shortName>
            <shortName evidence="1">MECPS</shortName>
            <ecNumber evidence="1">4.6.1.12</ecNumber>
        </recommendedName>
    </domain>
</protein>
<evidence type="ECO:0000255" key="1">
    <source>
        <dbReference type="HAMAP-Rule" id="MF_01520"/>
    </source>
</evidence>
<accession>A7ZCQ2</accession>
<dbReference type="EC" id="2.7.7.60" evidence="1"/>
<dbReference type="EC" id="4.6.1.12" evidence="1"/>
<dbReference type="EMBL" id="CP000792">
    <property type="protein sequence ID" value="EAT97612.1"/>
    <property type="molecule type" value="Genomic_DNA"/>
</dbReference>
<dbReference type="RefSeq" id="WP_012001518.1">
    <property type="nucleotide sequence ID" value="NC_009802.2"/>
</dbReference>
<dbReference type="SMR" id="A7ZCQ2"/>
<dbReference type="STRING" id="360104.CCC13826_1467"/>
<dbReference type="KEGG" id="cco:CCC13826_1467"/>
<dbReference type="eggNOG" id="COG0245">
    <property type="taxonomic scope" value="Bacteria"/>
</dbReference>
<dbReference type="eggNOG" id="COG1211">
    <property type="taxonomic scope" value="Bacteria"/>
</dbReference>
<dbReference type="HOGENOM" id="CLU_042800_2_6_7"/>
<dbReference type="OrthoDB" id="9804336at2"/>
<dbReference type="UniPathway" id="UPA00056">
    <property type="reaction ID" value="UER00093"/>
</dbReference>
<dbReference type="UniPathway" id="UPA00056">
    <property type="reaction ID" value="UER00095"/>
</dbReference>
<dbReference type="Proteomes" id="UP000001121">
    <property type="component" value="Chromosome"/>
</dbReference>
<dbReference type="GO" id="GO:0008685">
    <property type="term" value="F:2-C-methyl-D-erythritol 2,4-cyclodiphosphate synthase activity"/>
    <property type="evidence" value="ECO:0007669"/>
    <property type="project" value="UniProtKB-UniRule"/>
</dbReference>
<dbReference type="GO" id="GO:0050518">
    <property type="term" value="F:2-C-methyl-D-erythritol 4-phosphate cytidylyltransferase activity"/>
    <property type="evidence" value="ECO:0007669"/>
    <property type="project" value="UniProtKB-UniRule"/>
</dbReference>
<dbReference type="GO" id="GO:0046872">
    <property type="term" value="F:metal ion binding"/>
    <property type="evidence" value="ECO:0007669"/>
    <property type="project" value="UniProtKB-KW"/>
</dbReference>
<dbReference type="GO" id="GO:0019288">
    <property type="term" value="P:isopentenyl diphosphate biosynthetic process, methylerythritol 4-phosphate pathway"/>
    <property type="evidence" value="ECO:0007669"/>
    <property type="project" value="UniProtKB-UniRule"/>
</dbReference>
<dbReference type="GO" id="GO:0016114">
    <property type="term" value="P:terpenoid biosynthetic process"/>
    <property type="evidence" value="ECO:0007669"/>
    <property type="project" value="InterPro"/>
</dbReference>
<dbReference type="CDD" id="cd02516">
    <property type="entry name" value="CDP-ME_synthetase"/>
    <property type="match status" value="1"/>
</dbReference>
<dbReference type="CDD" id="cd00554">
    <property type="entry name" value="MECDP_synthase"/>
    <property type="match status" value="1"/>
</dbReference>
<dbReference type="Gene3D" id="3.30.1330.50">
    <property type="entry name" value="2-C-methyl-D-erythritol 2,4-cyclodiphosphate synthase"/>
    <property type="match status" value="1"/>
</dbReference>
<dbReference type="Gene3D" id="3.90.550.10">
    <property type="entry name" value="Spore Coat Polysaccharide Biosynthesis Protein SpsA, Chain A"/>
    <property type="match status" value="1"/>
</dbReference>
<dbReference type="HAMAP" id="MF_01520">
    <property type="entry name" value="IspDF"/>
    <property type="match status" value="1"/>
</dbReference>
<dbReference type="HAMAP" id="MF_00107">
    <property type="entry name" value="IspF"/>
    <property type="match status" value="1"/>
</dbReference>
<dbReference type="InterPro" id="IPR001228">
    <property type="entry name" value="IspD"/>
</dbReference>
<dbReference type="InterPro" id="IPR026596">
    <property type="entry name" value="IspD/F"/>
</dbReference>
<dbReference type="InterPro" id="IPR034683">
    <property type="entry name" value="IspD/TarI"/>
</dbReference>
<dbReference type="InterPro" id="IPR003526">
    <property type="entry name" value="MECDP_synthase"/>
</dbReference>
<dbReference type="InterPro" id="IPR020555">
    <property type="entry name" value="MECDP_synthase_CS"/>
</dbReference>
<dbReference type="InterPro" id="IPR036571">
    <property type="entry name" value="MECDP_synthase_sf"/>
</dbReference>
<dbReference type="InterPro" id="IPR029044">
    <property type="entry name" value="Nucleotide-diphossugar_trans"/>
</dbReference>
<dbReference type="NCBIfam" id="TIGR00453">
    <property type="entry name" value="ispD"/>
    <property type="match status" value="1"/>
</dbReference>
<dbReference type="NCBIfam" id="TIGR00151">
    <property type="entry name" value="ispF"/>
    <property type="match status" value="1"/>
</dbReference>
<dbReference type="NCBIfam" id="NF006899">
    <property type="entry name" value="PRK09382.1"/>
    <property type="match status" value="1"/>
</dbReference>
<dbReference type="PANTHER" id="PTHR43181">
    <property type="entry name" value="2-C-METHYL-D-ERYTHRITOL 2,4-CYCLODIPHOSPHATE SYNTHASE, CHLOROPLASTIC"/>
    <property type="match status" value="1"/>
</dbReference>
<dbReference type="PANTHER" id="PTHR43181:SF1">
    <property type="entry name" value="2-C-METHYL-D-ERYTHRITOL 2,4-CYCLODIPHOSPHATE SYNTHASE, CHLOROPLASTIC"/>
    <property type="match status" value="1"/>
</dbReference>
<dbReference type="Pfam" id="PF01128">
    <property type="entry name" value="IspD"/>
    <property type="match status" value="1"/>
</dbReference>
<dbReference type="Pfam" id="PF02542">
    <property type="entry name" value="YgbB"/>
    <property type="match status" value="1"/>
</dbReference>
<dbReference type="SUPFAM" id="SSF69765">
    <property type="entry name" value="IpsF-like"/>
    <property type="match status" value="1"/>
</dbReference>
<dbReference type="SUPFAM" id="SSF53448">
    <property type="entry name" value="Nucleotide-diphospho-sugar transferases"/>
    <property type="match status" value="1"/>
</dbReference>
<dbReference type="PROSITE" id="PS01350">
    <property type="entry name" value="ISPF"/>
    <property type="match status" value="1"/>
</dbReference>
<sequence>MLDISLIMLGAGNSSRFELPVKKQWLRIGSDPLWLFATKNLSNFYTFKEIIVVSKECKYMSKFAPNYKFVDGGETRQDSLKNALELVSSEFVLVSDIARPCISSELFHKIIEAAAQADCVVPALKIADTAYLGENAIDREKVKLIQTPQLSRTTLLKKALSSGEIYTDDSSAMRAIGASVWHILGDEMARKITFKEDLVKISALKAPENELFVGSGFDVHEFEKGRPLVLCGEKIDYEFGLKAHSDGDVALHALTDAILGAAGLGDIGELFPDTDDKFKDISSIYLLQEAYKRVQSVGFVLTNADITIMAQKPKLSKLKSKMEANIAQALNLSQSRINVKATTTEGLGFVGRCEGIAVMASASLKFYNWTQI</sequence>
<organism>
    <name type="scientific">Campylobacter concisus (strain 13826)</name>
    <dbReference type="NCBI Taxonomy" id="360104"/>
    <lineage>
        <taxon>Bacteria</taxon>
        <taxon>Pseudomonadati</taxon>
        <taxon>Campylobacterota</taxon>
        <taxon>Epsilonproteobacteria</taxon>
        <taxon>Campylobacterales</taxon>
        <taxon>Campylobacteraceae</taxon>
        <taxon>Campylobacter</taxon>
    </lineage>
</organism>
<comment type="function">
    <text evidence="1">Bifunctional enzyme that catalyzes the formation of 4-diphosphocytidyl-2-C-methyl-D-erythritol from CTP and 2-C-methyl-D-erythritol 4-phosphate (MEP) (IspD), and catalyzes the conversion of 4-diphosphocytidyl-2-C-methyl-D-erythritol 2-phosphate (CDP-ME2P) to 2-C-methyl-D-erythritol 2,4-cyclodiphosphate (ME-CPP) with a corresponding release of cytidine 5-monophosphate (CMP) (IspF).</text>
</comment>
<comment type="catalytic activity">
    <reaction evidence="1">
        <text>2-C-methyl-D-erythritol 4-phosphate + CTP + H(+) = 4-CDP-2-C-methyl-D-erythritol + diphosphate</text>
        <dbReference type="Rhea" id="RHEA:13429"/>
        <dbReference type="ChEBI" id="CHEBI:15378"/>
        <dbReference type="ChEBI" id="CHEBI:33019"/>
        <dbReference type="ChEBI" id="CHEBI:37563"/>
        <dbReference type="ChEBI" id="CHEBI:57823"/>
        <dbReference type="ChEBI" id="CHEBI:58262"/>
        <dbReference type="EC" id="2.7.7.60"/>
    </reaction>
</comment>
<comment type="catalytic activity">
    <reaction evidence="1">
        <text>4-CDP-2-C-methyl-D-erythritol 2-phosphate = 2-C-methyl-D-erythritol 2,4-cyclic diphosphate + CMP</text>
        <dbReference type="Rhea" id="RHEA:23864"/>
        <dbReference type="ChEBI" id="CHEBI:57919"/>
        <dbReference type="ChEBI" id="CHEBI:58483"/>
        <dbReference type="ChEBI" id="CHEBI:60377"/>
        <dbReference type="EC" id="4.6.1.12"/>
    </reaction>
</comment>
<comment type="cofactor">
    <cofactor evidence="1">
        <name>a divalent metal cation</name>
        <dbReference type="ChEBI" id="CHEBI:60240"/>
    </cofactor>
</comment>
<comment type="pathway">
    <text evidence="1">Isoprenoid biosynthesis; isopentenyl diphosphate biosynthesis via DXP pathway; isopentenyl diphosphate from 1-deoxy-D-xylulose 5-phosphate: step 2/6.</text>
</comment>
<comment type="pathway">
    <text evidence="1">Isoprenoid biosynthesis; isopentenyl diphosphate biosynthesis via DXP pathway; isopentenyl diphosphate from 1-deoxy-D-xylulose 5-phosphate: step 4/6.</text>
</comment>
<comment type="similarity">
    <text evidence="1">In the N-terminal section; belongs to the IspD/TarI cytidylyltransferase family. IspD subfamily.</text>
</comment>
<comment type="similarity">
    <text evidence="1">In the C-terminal section; belongs to the IspF family.</text>
</comment>
<feature type="chain" id="PRO_1000073539" description="Bifunctional enzyme IspD/IspF">
    <location>
        <begin position="1"/>
        <end position="372"/>
    </location>
</feature>
<feature type="region of interest" description="2-C-methyl-D-erythritol 4-phosphate cytidylyltransferase" evidence="1">
    <location>
        <begin position="1"/>
        <end position="211"/>
    </location>
</feature>
<feature type="region of interest" description="2-C-methyl-D-erythritol 2,4-cyclodiphosphate synthase" evidence="1">
    <location>
        <begin position="212"/>
        <end position="372"/>
    </location>
</feature>
<feature type="binding site" evidence="1">
    <location>
        <begin position="218"/>
        <end position="220"/>
    </location>
    <ligand>
        <name>4-CDP-2-C-methyl-D-erythritol 2-phosphate</name>
        <dbReference type="ChEBI" id="CHEBI:57919"/>
    </ligand>
</feature>
<feature type="binding site" evidence="1">
    <location>
        <position position="218"/>
    </location>
    <ligand>
        <name>a divalent metal cation</name>
        <dbReference type="ChEBI" id="CHEBI:60240"/>
    </ligand>
</feature>
<feature type="binding site" evidence="1">
    <location>
        <position position="220"/>
    </location>
    <ligand>
        <name>a divalent metal cation</name>
        <dbReference type="ChEBI" id="CHEBI:60240"/>
    </ligand>
</feature>
<feature type="binding site" evidence="1">
    <location>
        <begin position="244"/>
        <end position="245"/>
    </location>
    <ligand>
        <name>4-CDP-2-C-methyl-D-erythritol 2-phosphate</name>
        <dbReference type="ChEBI" id="CHEBI:57919"/>
    </ligand>
</feature>
<feature type="binding site" evidence="1">
    <location>
        <position position="252"/>
    </location>
    <ligand>
        <name>a divalent metal cation</name>
        <dbReference type="ChEBI" id="CHEBI:60240"/>
    </ligand>
</feature>
<feature type="binding site" evidence="1">
    <location>
        <begin position="266"/>
        <end position="268"/>
    </location>
    <ligand>
        <name>4-CDP-2-C-methyl-D-erythritol 2-phosphate</name>
        <dbReference type="ChEBI" id="CHEBI:57919"/>
    </ligand>
</feature>
<feature type="binding site" evidence="1">
    <location>
        <begin position="271"/>
        <end position="275"/>
    </location>
    <ligand>
        <name>4-CDP-2-C-methyl-D-erythritol 2-phosphate</name>
        <dbReference type="ChEBI" id="CHEBI:57919"/>
    </ligand>
</feature>
<feature type="binding site" evidence="1">
    <location>
        <begin position="342"/>
        <end position="345"/>
    </location>
    <ligand>
        <name>4-CDP-2-C-methyl-D-erythritol 2-phosphate</name>
        <dbReference type="ChEBI" id="CHEBI:57919"/>
    </ligand>
</feature>
<feature type="binding site" evidence="1">
    <location>
        <position position="349"/>
    </location>
    <ligand>
        <name>4-CDP-2-C-methyl-D-erythritol 2-phosphate</name>
        <dbReference type="ChEBI" id="CHEBI:57919"/>
    </ligand>
</feature>
<feature type="binding site" evidence="1">
    <location>
        <position position="352"/>
    </location>
    <ligand>
        <name>4-CDP-2-C-methyl-D-erythritol 2-phosphate</name>
        <dbReference type="ChEBI" id="CHEBI:57919"/>
    </ligand>
</feature>
<feature type="site" description="Transition state stabilizer" evidence="1">
    <location>
        <position position="16"/>
    </location>
</feature>
<feature type="site" description="Transition state stabilizer" evidence="1">
    <location>
        <position position="23"/>
    </location>
</feature>
<feature type="site" description="Positions MEP for the nucleophilic attack" evidence="1">
    <location>
        <position position="139"/>
    </location>
</feature>
<feature type="site" description="Positions MEP for the nucleophilic attack" evidence="1">
    <location>
        <position position="191"/>
    </location>
</feature>
<feature type="site" description="Transition state stabilizer" evidence="1">
    <location>
        <position position="244"/>
    </location>
</feature>
<feature type="site" description="Transition state stabilizer" evidence="1">
    <location>
        <position position="343"/>
    </location>
</feature>